<comment type="function">
    <text evidence="1">Catalyzes the transfer of the phosphoribosyl group of 5-phosphorylribose-1-pyrophosphate (PRPP) to anthranilate to yield N-(5'-phosphoribosyl)-anthranilate (PRA).</text>
</comment>
<comment type="catalytic activity">
    <reaction evidence="1">
        <text>N-(5-phospho-beta-D-ribosyl)anthranilate + diphosphate = 5-phospho-alpha-D-ribose 1-diphosphate + anthranilate</text>
        <dbReference type="Rhea" id="RHEA:11768"/>
        <dbReference type="ChEBI" id="CHEBI:16567"/>
        <dbReference type="ChEBI" id="CHEBI:18277"/>
        <dbReference type="ChEBI" id="CHEBI:33019"/>
        <dbReference type="ChEBI" id="CHEBI:58017"/>
        <dbReference type="EC" id="2.4.2.18"/>
    </reaction>
</comment>
<comment type="cofactor">
    <cofactor evidence="1">
        <name>Mg(2+)</name>
        <dbReference type="ChEBI" id="CHEBI:18420"/>
    </cofactor>
    <text evidence="1">Binds 2 magnesium ions per monomer.</text>
</comment>
<comment type="pathway">
    <text evidence="1">Amino-acid biosynthesis; L-tryptophan biosynthesis; L-tryptophan from chorismate: step 2/5.</text>
</comment>
<comment type="subunit">
    <text evidence="1">Homodimer.</text>
</comment>
<comment type="similarity">
    <text evidence="1">Belongs to the anthranilate phosphoribosyltransferase family.</text>
</comment>
<accession>A9F0C1</accession>
<proteinExistence type="inferred from homology"/>
<feature type="chain" id="PRO_1000078028" description="Anthranilate phosphoribosyltransferase">
    <location>
        <begin position="1"/>
        <end position="348"/>
    </location>
</feature>
<feature type="binding site" evidence="1">
    <location>
        <position position="80"/>
    </location>
    <ligand>
        <name>5-phospho-alpha-D-ribose 1-diphosphate</name>
        <dbReference type="ChEBI" id="CHEBI:58017"/>
    </ligand>
</feature>
<feature type="binding site" evidence="1">
    <location>
        <position position="80"/>
    </location>
    <ligand>
        <name>anthranilate</name>
        <dbReference type="ChEBI" id="CHEBI:16567"/>
        <label>1</label>
    </ligand>
</feature>
<feature type="binding site" evidence="1">
    <location>
        <begin position="83"/>
        <end position="84"/>
    </location>
    <ligand>
        <name>5-phospho-alpha-D-ribose 1-diphosphate</name>
        <dbReference type="ChEBI" id="CHEBI:58017"/>
    </ligand>
</feature>
<feature type="binding site" evidence="1">
    <location>
        <position position="88"/>
    </location>
    <ligand>
        <name>5-phospho-alpha-D-ribose 1-diphosphate</name>
        <dbReference type="ChEBI" id="CHEBI:58017"/>
    </ligand>
</feature>
<feature type="binding site" evidence="1">
    <location>
        <begin position="90"/>
        <end position="93"/>
    </location>
    <ligand>
        <name>5-phospho-alpha-D-ribose 1-diphosphate</name>
        <dbReference type="ChEBI" id="CHEBI:58017"/>
    </ligand>
</feature>
<feature type="binding site" evidence="1">
    <location>
        <position position="92"/>
    </location>
    <ligand>
        <name>Mg(2+)</name>
        <dbReference type="ChEBI" id="CHEBI:18420"/>
        <label>1</label>
    </ligand>
</feature>
<feature type="binding site" evidence="1">
    <location>
        <begin position="108"/>
        <end position="116"/>
    </location>
    <ligand>
        <name>5-phospho-alpha-D-ribose 1-diphosphate</name>
        <dbReference type="ChEBI" id="CHEBI:58017"/>
    </ligand>
</feature>
<feature type="binding site" evidence="1">
    <location>
        <position position="111"/>
    </location>
    <ligand>
        <name>anthranilate</name>
        <dbReference type="ChEBI" id="CHEBI:16567"/>
        <label>1</label>
    </ligand>
</feature>
<feature type="binding site" evidence="1">
    <location>
        <position position="120"/>
    </location>
    <ligand>
        <name>5-phospho-alpha-D-ribose 1-diphosphate</name>
        <dbReference type="ChEBI" id="CHEBI:58017"/>
    </ligand>
</feature>
<feature type="binding site" evidence="1">
    <location>
        <position position="166"/>
    </location>
    <ligand>
        <name>anthranilate</name>
        <dbReference type="ChEBI" id="CHEBI:16567"/>
        <label>2</label>
    </ligand>
</feature>
<feature type="binding site" evidence="1">
    <location>
        <position position="224"/>
    </location>
    <ligand>
        <name>Mg(2+)</name>
        <dbReference type="ChEBI" id="CHEBI:18420"/>
        <label>2</label>
    </ligand>
</feature>
<feature type="binding site" evidence="1">
    <location>
        <position position="225"/>
    </location>
    <ligand>
        <name>Mg(2+)</name>
        <dbReference type="ChEBI" id="CHEBI:18420"/>
        <label>1</label>
    </ligand>
</feature>
<feature type="binding site" evidence="1">
    <location>
        <position position="225"/>
    </location>
    <ligand>
        <name>Mg(2+)</name>
        <dbReference type="ChEBI" id="CHEBI:18420"/>
        <label>2</label>
    </ligand>
</feature>
<evidence type="ECO:0000255" key="1">
    <source>
        <dbReference type="HAMAP-Rule" id="MF_00211"/>
    </source>
</evidence>
<name>TRPD_SORC5</name>
<dbReference type="EC" id="2.4.2.18" evidence="1"/>
<dbReference type="EMBL" id="AM746676">
    <property type="protein sequence ID" value="CAN91257.1"/>
    <property type="molecule type" value="Genomic_DNA"/>
</dbReference>
<dbReference type="RefSeq" id="WP_012233734.1">
    <property type="nucleotide sequence ID" value="NC_010162.1"/>
</dbReference>
<dbReference type="SMR" id="A9F0C1"/>
<dbReference type="STRING" id="448385.sce1100"/>
<dbReference type="KEGG" id="scl:sce1100"/>
<dbReference type="eggNOG" id="COG0547">
    <property type="taxonomic scope" value="Bacteria"/>
</dbReference>
<dbReference type="HOGENOM" id="CLU_034315_2_1_7"/>
<dbReference type="OrthoDB" id="9806430at2"/>
<dbReference type="BioCyc" id="SCEL448385:SCE_RS05745-MONOMER"/>
<dbReference type="UniPathway" id="UPA00035">
    <property type="reaction ID" value="UER00041"/>
</dbReference>
<dbReference type="Proteomes" id="UP000002139">
    <property type="component" value="Chromosome"/>
</dbReference>
<dbReference type="GO" id="GO:0005829">
    <property type="term" value="C:cytosol"/>
    <property type="evidence" value="ECO:0007669"/>
    <property type="project" value="TreeGrafter"/>
</dbReference>
<dbReference type="GO" id="GO:0004048">
    <property type="term" value="F:anthranilate phosphoribosyltransferase activity"/>
    <property type="evidence" value="ECO:0007669"/>
    <property type="project" value="UniProtKB-UniRule"/>
</dbReference>
<dbReference type="GO" id="GO:0000287">
    <property type="term" value="F:magnesium ion binding"/>
    <property type="evidence" value="ECO:0007669"/>
    <property type="project" value="UniProtKB-UniRule"/>
</dbReference>
<dbReference type="GO" id="GO:0000162">
    <property type="term" value="P:L-tryptophan biosynthetic process"/>
    <property type="evidence" value="ECO:0007669"/>
    <property type="project" value="UniProtKB-UniRule"/>
</dbReference>
<dbReference type="FunFam" id="3.40.1030.10:FF:000002">
    <property type="entry name" value="Anthranilate phosphoribosyltransferase"/>
    <property type="match status" value="1"/>
</dbReference>
<dbReference type="Gene3D" id="3.40.1030.10">
    <property type="entry name" value="Nucleoside phosphorylase/phosphoribosyltransferase catalytic domain"/>
    <property type="match status" value="1"/>
</dbReference>
<dbReference type="Gene3D" id="1.20.970.10">
    <property type="entry name" value="Transferase, Pyrimidine Nucleoside Phosphorylase, Chain C"/>
    <property type="match status" value="1"/>
</dbReference>
<dbReference type="HAMAP" id="MF_00211">
    <property type="entry name" value="TrpD"/>
    <property type="match status" value="1"/>
</dbReference>
<dbReference type="InterPro" id="IPR005940">
    <property type="entry name" value="Anthranilate_Pribosyl_Tfrase"/>
</dbReference>
<dbReference type="InterPro" id="IPR000312">
    <property type="entry name" value="Glycosyl_Trfase_fam3"/>
</dbReference>
<dbReference type="InterPro" id="IPR017459">
    <property type="entry name" value="Glycosyl_Trfase_fam3_N_dom"/>
</dbReference>
<dbReference type="InterPro" id="IPR036320">
    <property type="entry name" value="Glycosyl_Trfase_fam3_N_dom_sf"/>
</dbReference>
<dbReference type="InterPro" id="IPR035902">
    <property type="entry name" value="Nuc_phospho_transferase"/>
</dbReference>
<dbReference type="NCBIfam" id="TIGR01245">
    <property type="entry name" value="trpD"/>
    <property type="match status" value="1"/>
</dbReference>
<dbReference type="PANTHER" id="PTHR43285">
    <property type="entry name" value="ANTHRANILATE PHOSPHORIBOSYLTRANSFERASE"/>
    <property type="match status" value="1"/>
</dbReference>
<dbReference type="PANTHER" id="PTHR43285:SF2">
    <property type="entry name" value="ANTHRANILATE PHOSPHORIBOSYLTRANSFERASE"/>
    <property type="match status" value="1"/>
</dbReference>
<dbReference type="Pfam" id="PF02885">
    <property type="entry name" value="Glycos_trans_3N"/>
    <property type="match status" value="1"/>
</dbReference>
<dbReference type="Pfam" id="PF00591">
    <property type="entry name" value="Glycos_transf_3"/>
    <property type="match status" value="1"/>
</dbReference>
<dbReference type="SUPFAM" id="SSF52418">
    <property type="entry name" value="Nucleoside phosphorylase/phosphoribosyltransferase catalytic domain"/>
    <property type="match status" value="1"/>
</dbReference>
<dbReference type="SUPFAM" id="SSF47648">
    <property type="entry name" value="Nucleoside phosphorylase/phosphoribosyltransferase N-terminal domain"/>
    <property type="match status" value="1"/>
</dbReference>
<organism>
    <name type="scientific">Sorangium cellulosum (strain So ce56)</name>
    <name type="common">Polyangium cellulosum (strain So ce56)</name>
    <dbReference type="NCBI Taxonomy" id="448385"/>
    <lineage>
        <taxon>Bacteria</taxon>
        <taxon>Pseudomonadati</taxon>
        <taxon>Myxococcota</taxon>
        <taxon>Polyangia</taxon>
        <taxon>Polyangiales</taxon>
        <taxon>Polyangiaceae</taxon>
        <taxon>Sorangium</taxon>
    </lineage>
</organism>
<protein>
    <recommendedName>
        <fullName evidence="1">Anthranilate phosphoribosyltransferase</fullName>
        <ecNumber evidence="1">2.4.2.18</ecNumber>
    </recommendedName>
</protein>
<keyword id="KW-0028">Amino-acid biosynthesis</keyword>
<keyword id="KW-0057">Aromatic amino acid biosynthesis</keyword>
<keyword id="KW-0328">Glycosyltransferase</keyword>
<keyword id="KW-0460">Magnesium</keyword>
<keyword id="KW-0479">Metal-binding</keyword>
<keyword id="KW-1185">Reference proteome</keyword>
<keyword id="KW-0808">Transferase</keyword>
<keyword id="KW-0822">Tryptophan biosynthesis</keyword>
<sequence length="348" mass="35835">MMHAVIDALCAGVDLSAEQTEALFRDLIAGALTEIELSALFVALKAKGETPAEIAGAARALRGTSVPFARPAYVYADCCGTGGDGQSTVNVSTAVAFVAAEAGLPVAKHGNRSVSSQCGSADALEALGARLDPPAEVSRRALDEVGFCFLFAPQYHAGLRHAMPVRRALKVRTIMNLLGPLVNPSAPPIQVMGIYDPELVTHAARTLGMLGCQAALVVHGGGLDEVALHAPTRAARLRDGVVEELLIDPADAGVAPAPIEALRGAGPAANAAWLRDLLAGRGAPAHRDAVAINAGALLWIAGRAEGLREGTALALEALGSGRAAERLTRFVALSRDGAQEARKEAKHG</sequence>
<gene>
    <name evidence="1" type="primary">trpD</name>
    <name type="ordered locus">sce1100</name>
</gene>
<reference key="1">
    <citation type="journal article" date="2007" name="Nat. Biotechnol.">
        <title>Complete genome sequence of the myxobacterium Sorangium cellulosum.</title>
        <authorList>
            <person name="Schneiker S."/>
            <person name="Perlova O."/>
            <person name="Kaiser O."/>
            <person name="Gerth K."/>
            <person name="Alici A."/>
            <person name="Altmeyer M.O."/>
            <person name="Bartels D."/>
            <person name="Bekel T."/>
            <person name="Beyer S."/>
            <person name="Bode E."/>
            <person name="Bode H.B."/>
            <person name="Bolten C.J."/>
            <person name="Choudhuri J.V."/>
            <person name="Doss S."/>
            <person name="Elnakady Y.A."/>
            <person name="Frank B."/>
            <person name="Gaigalat L."/>
            <person name="Goesmann A."/>
            <person name="Groeger C."/>
            <person name="Gross F."/>
            <person name="Jelsbak L."/>
            <person name="Jelsbak L."/>
            <person name="Kalinowski J."/>
            <person name="Kegler C."/>
            <person name="Knauber T."/>
            <person name="Konietzny S."/>
            <person name="Kopp M."/>
            <person name="Krause L."/>
            <person name="Krug D."/>
            <person name="Linke B."/>
            <person name="Mahmud T."/>
            <person name="Martinez-Arias R."/>
            <person name="McHardy A.C."/>
            <person name="Merai M."/>
            <person name="Meyer F."/>
            <person name="Mormann S."/>
            <person name="Munoz-Dorado J."/>
            <person name="Perez J."/>
            <person name="Pradella S."/>
            <person name="Rachid S."/>
            <person name="Raddatz G."/>
            <person name="Rosenau F."/>
            <person name="Rueckert C."/>
            <person name="Sasse F."/>
            <person name="Scharfe M."/>
            <person name="Schuster S.C."/>
            <person name="Suen G."/>
            <person name="Treuner-Lange A."/>
            <person name="Velicer G.J."/>
            <person name="Vorholter F.-J."/>
            <person name="Weissman K.J."/>
            <person name="Welch R.D."/>
            <person name="Wenzel S.C."/>
            <person name="Whitworth D.E."/>
            <person name="Wilhelm S."/>
            <person name="Wittmann C."/>
            <person name="Bloecker H."/>
            <person name="Puehler A."/>
            <person name="Mueller R."/>
        </authorList>
    </citation>
    <scope>NUCLEOTIDE SEQUENCE [LARGE SCALE GENOMIC DNA]</scope>
    <source>
        <strain>So ce56</strain>
    </source>
</reference>